<keyword id="KW-0413">Isomerase</keyword>
<keyword id="KW-0819">tRNA processing</keyword>
<sequence length="262" mass="29872">MRIALCIEYDGAEYYGWQRQRDVNSVQEELEKALTIVANEPIEVHCAGRTDAGVHGTGQVVHFDTTSSRKLAAWMMGANANLPKNIAVRWAKEVNEDFHARFTATARRYRYIIYNNRLRPAILGHGVSHYHDALDANLMHEAGQYLLGENDFTSFRAVHCQSRSPWRNLMHLKVTRHGDFIVIDIKANAFVHHMVRNITGSLIEVGKGKQKPEWIKWLLEAKDRKLAGATAKAEGLYLVDVDYPLEWELPRVPLGPLFLDND</sequence>
<feature type="chain" id="PRO_1000097804" description="tRNA pseudouridine synthase A">
    <location>
        <begin position="1"/>
        <end position="262"/>
    </location>
</feature>
<feature type="active site" description="Nucleophile" evidence="1">
    <location>
        <position position="51"/>
    </location>
</feature>
<feature type="binding site" evidence="1">
    <location>
        <position position="109"/>
    </location>
    <ligand>
        <name>substrate</name>
    </ligand>
</feature>
<name>TRUA_ALIFM</name>
<protein>
    <recommendedName>
        <fullName evidence="1">tRNA pseudouridine synthase A</fullName>
        <ecNumber evidence="1">5.4.99.12</ecNumber>
    </recommendedName>
    <alternativeName>
        <fullName evidence="1">tRNA pseudouridine(38-40) synthase</fullName>
    </alternativeName>
    <alternativeName>
        <fullName evidence="1">tRNA pseudouridylate synthase I</fullName>
    </alternativeName>
    <alternativeName>
        <fullName evidence="1">tRNA-uridine isomerase I</fullName>
    </alternativeName>
</protein>
<organism>
    <name type="scientific">Aliivibrio fischeri (strain MJ11)</name>
    <name type="common">Vibrio fischeri</name>
    <dbReference type="NCBI Taxonomy" id="388396"/>
    <lineage>
        <taxon>Bacteria</taxon>
        <taxon>Pseudomonadati</taxon>
        <taxon>Pseudomonadota</taxon>
        <taxon>Gammaproteobacteria</taxon>
        <taxon>Vibrionales</taxon>
        <taxon>Vibrionaceae</taxon>
        <taxon>Aliivibrio</taxon>
    </lineage>
</organism>
<evidence type="ECO:0000255" key="1">
    <source>
        <dbReference type="HAMAP-Rule" id="MF_00171"/>
    </source>
</evidence>
<proteinExistence type="inferred from homology"/>
<gene>
    <name evidence="1" type="primary">truA</name>
    <name type="ordered locus">VFMJ11_1822</name>
</gene>
<accession>B5FFN7</accession>
<comment type="function">
    <text evidence="1">Formation of pseudouridine at positions 38, 39 and 40 in the anticodon stem and loop of transfer RNAs.</text>
</comment>
<comment type="catalytic activity">
    <reaction evidence="1">
        <text>uridine(38/39/40) in tRNA = pseudouridine(38/39/40) in tRNA</text>
        <dbReference type="Rhea" id="RHEA:22376"/>
        <dbReference type="Rhea" id="RHEA-COMP:10085"/>
        <dbReference type="Rhea" id="RHEA-COMP:10087"/>
        <dbReference type="ChEBI" id="CHEBI:65314"/>
        <dbReference type="ChEBI" id="CHEBI:65315"/>
        <dbReference type="EC" id="5.4.99.12"/>
    </reaction>
</comment>
<comment type="subunit">
    <text evidence="1">Homodimer.</text>
</comment>
<comment type="similarity">
    <text evidence="1">Belongs to the tRNA pseudouridine synthase TruA family.</text>
</comment>
<dbReference type="EC" id="5.4.99.12" evidence="1"/>
<dbReference type="EMBL" id="CP001139">
    <property type="protein sequence ID" value="ACH65202.1"/>
    <property type="molecule type" value="Genomic_DNA"/>
</dbReference>
<dbReference type="RefSeq" id="WP_011262251.1">
    <property type="nucleotide sequence ID" value="NC_011184.1"/>
</dbReference>
<dbReference type="SMR" id="B5FFN7"/>
<dbReference type="GeneID" id="54164391"/>
<dbReference type="KEGG" id="vfm:VFMJ11_1822"/>
<dbReference type="HOGENOM" id="CLU_014673_0_2_6"/>
<dbReference type="Proteomes" id="UP000001857">
    <property type="component" value="Chromosome I"/>
</dbReference>
<dbReference type="GO" id="GO:0003723">
    <property type="term" value="F:RNA binding"/>
    <property type="evidence" value="ECO:0007669"/>
    <property type="project" value="InterPro"/>
</dbReference>
<dbReference type="GO" id="GO:0160147">
    <property type="term" value="F:tRNA pseudouridine(38-40) synthase activity"/>
    <property type="evidence" value="ECO:0007669"/>
    <property type="project" value="UniProtKB-EC"/>
</dbReference>
<dbReference type="GO" id="GO:0031119">
    <property type="term" value="P:tRNA pseudouridine synthesis"/>
    <property type="evidence" value="ECO:0007669"/>
    <property type="project" value="UniProtKB-UniRule"/>
</dbReference>
<dbReference type="CDD" id="cd02570">
    <property type="entry name" value="PseudoU_synth_EcTruA"/>
    <property type="match status" value="1"/>
</dbReference>
<dbReference type="FunFam" id="3.30.70.580:FF:000001">
    <property type="entry name" value="tRNA pseudouridine synthase A"/>
    <property type="match status" value="1"/>
</dbReference>
<dbReference type="FunFam" id="3.30.70.660:FF:000001">
    <property type="entry name" value="tRNA pseudouridine synthase A"/>
    <property type="match status" value="1"/>
</dbReference>
<dbReference type="Gene3D" id="3.30.70.660">
    <property type="entry name" value="Pseudouridine synthase I, catalytic domain, C-terminal subdomain"/>
    <property type="match status" value="1"/>
</dbReference>
<dbReference type="Gene3D" id="3.30.70.580">
    <property type="entry name" value="Pseudouridine synthase I, catalytic domain, N-terminal subdomain"/>
    <property type="match status" value="1"/>
</dbReference>
<dbReference type="HAMAP" id="MF_00171">
    <property type="entry name" value="TruA"/>
    <property type="match status" value="1"/>
</dbReference>
<dbReference type="InterPro" id="IPR020103">
    <property type="entry name" value="PsdUridine_synth_cat_dom_sf"/>
</dbReference>
<dbReference type="InterPro" id="IPR001406">
    <property type="entry name" value="PsdUridine_synth_TruA"/>
</dbReference>
<dbReference type="InterPro" id="IPR020097">
    <property type="entry name" value="PsdUridine_synth_TruA_a/b_dom"/>
</dbReference>
<dbReference type="InterPro" id="IPR020095">
    <property type="entry name" value="PsdUridine_synth_TruA_C"/>
</dbReference>
<dbReference type="InterPro" id="IPR020094">
    <property type="entry name" value="TruA/RsuA/RluB/E/F_N"/>
</dbReference>
<dbReference type="NCBIfam" id="TIGR00071">
    <property type="entry name" value="hisT_truA"/>
    <property type="match status" value="1"/>
</dbReference>
<dbReference type="PANTHER" id="PTHR11142">
    <property type="entry name" value="PSEUDOURIDYLATE SYNTHASE"/>
    <property type="match status" value="1"/>
</dbReference>
<dbReference type="PANTHER" id="PTHR11142:SF0">
    <property type="entry name" value="TRNA PSEUDOURIDINE SYNTHASE-LIKE 1"/>
    <property type="match status" value="1"/>
</dbReference>
<dbReference type="Pfam" id="PF01416">
    <property type="entry name" value="PseudoU_synth_1"/>
    <property type="match status" value="2"/>
</dbReference>
<dbReference type="PIRSF" id="PIRSF001430">
    <property type="entry name" value="tRNA_psdUrid_synth"/>
    <property type="match status" value="1"/>
</dbReference>
<dbReference type="SUPFAM" id="SSF55120">
    <property type="entry name" value="Pseudouridine synthase"/>
    <property type="match status" value="1"/>
</dbReference>
<reference key="1">
    <citation type="submission" date="2008-08" db="EMBL/GenBank/DDBJ databases">
        <title>Complete sequence of Vibrio fischeri strain MJ11.</title>
        <authorList>
            <person name="Mandel M.J."/>
            <person name="Stabb E.V."/>
            <person name="Ruby E.G."/>
            <person name="Ferriera S."/>
            <person name="Johnson J."/>
            <person name="Kravitz S."/>
            <person name="Beeson K."/>
            <person name="Sutton G."/>
            <person name="Rogers Y.-H."/>
            <person name="Friedman R."/>
            <person name="Frazier M."/>
            <person name="Venter J.C."/>
        </authorList>
    </citation>
    <scope>NUCLEOTIDE SEQUENCE [LARGE SCALE GENOMIC DNA]</scope>
    <source>
        <strain>MJ11</strain>
    </source>
</reference>